<evidence type="ECO:0000250" key="1"/>
<evidence type="ECO:0000250" key="2">
    <source>
        <dbReference type="UniProtKB" id="P01374"/>
    </source>
</evidence>
<evidence type="ECO:0000255" key="3"/>
<evidence type="ECO:0000255" key="4">
    <source>
        <dbReference type="PROSITE-ProRule" id="PRU01387"/>
    </source>
</evidence>
<evidence type="ECO:0000305" key="5"/>
<accession>Q06332</accession>
<feature type="signal peptide" evidence="1">
    <location>
        <begin position="1"/>
        <end position="33"/>
    </location>
</feature>
<feature type="chain" id="PRO_0000034471" description="Lymphotoxin-alpha">
    <location>
        <begin position="34"/>
        <end position="202"/>
    </location>
</feature>
<feature type="domain" description="THD" evidence="4">
    <location>
        <begin position="60"/>
        <end position="202"/>
    </location>
</feature>
<feature type="glycosylation site" description="N-linked (GlcNAc...) asparagine" evidence="3">
    <location>
        <position position="93"/>
    </location>
</feature>
<organism>
    <name type="scientific">Rattus norvegicus</name>
    <name type="common">Rat</name>
    <dbReference type="NCBI Taxonomy" id="10116"/>
    <lineage>
        <taxon>Eukaryota</taxon>
        <taxon>Metazoa</taxon>
        <taxon>Chordata</taxon>
        <taxon>Craniata</taxon>
        <taxon>Vertebrata</taxon>
        <taxon>Euteleostomi</taxon>
        <taxon>Mammalia</taxon>
        <taxon>Eutheria</taxon>
        <taxon>Euarchontoglires</taxon>
        <taxon>Glires</taxon>
        <taxon>Rodentia</taxon>
        <taxon>Myomorpha</taxon>
        <taxon>Muroidea</taxon>
        <taxon>Muridae</taxon>
        <taxon>Murinae</taxon>
        <taxon>Rattus</taxon>
    </lineage>
</organism>
<dbReference type="EMBL" id="L00981">
    <property type="protein sequence ID" value="AAA16276.1"/>
    <property type="molecule type" value="Genomic_DNA"/>
</dbReference>
<dbReference type="EMBL" id="BX883046">
    <property type="protein sequence ID" value="CAE84004.1"/>
    <property type="molecule type" value="Genomic_DNA"/>
</dbReference>
<dbReference type="PIR" id="JN0869">
    <property type="entry name" value="JN0869"/>
</dbReference>
<dbReference type="RefSeq" id="NP_542947.1">
    <property type="nucleotide sequence ID" value="NM_080769.2"/>
</dbReference>
<dbReference type="RefSeq" id="XP_017457036.1">
    <property type="nucleotide sequence ID" value="XM_017601547.1"/>
</dbReference>
<dbReference type="RefSeq" id="XP_038954358.1">
    <property type="nucleotide sequence ID" value="XM_039098430.2"/>
</dbReference>
<dbReference type="SMR" id="Q06332"/>
<dbReference type="FunCoup" id="Q06332">
    <property type="interactions" value="19"/>
</dbReference>
<dbReference type="STRING" id="10116.ENSRNOP00000001111"/>
<dbReference type="GlyCosmos" id="Q06332">
    <property type="glycosylation" value="1 site, No reported glycans"/>
</dbReference>
<dbReference type="GlyGen" id="Q06332">
    <property type="glycosylation" value="1 site"/>
</dbReference>
<dbReference type="PaxDb" id="10116-ENSRNOP00000001111"/>
<dbReference type="Ensembl" id="ENSRNOT00000001111.3">
    <property type="protein sequence ID" value="ENSRNOP00000001111.1"/>
    <property type="gene ID" value="ENSRNOG00000000838.4"/>
</dbReference>
<dbReference type="GeneID" id="25008"/>
<dbReference type="KEGG" id="rno:25008"/>
<dbReference type="UCSC" id="RGD:3020">
    <property type="organism name" value="rat"/>
</dbReference>
<dbReference type="AGR" id="RGD:3020"/>
<dbReference type="CTD" id="4049"/>
<dbReference type="RGD" id="3020">
    <property type="gene designation" value="Lta"/>
</dbReference>
<dbReference type="eggNOG" id="ENOG502S956">
    <property type="taxonomic scope" value="Eukaryota"/>
</dbReference>
<dbReference type="GeneTree" id="ENSGT01060000248544"/>
<dbReference type="InParanoid" id="Q06332"/>
<dbReference type="OMA" id="MEGECKV"/>
<dbReference type="OrthoDB" id="9940698at2759"/>
<dbReference type="PhylomeDB" id="Q06332"/>
<dbReference type="TreeFam" id="TF332169"/>
<dbReference type="Reactome" id="R-RNO-5668541">
    <property type="pathway name" value="TNFR2 non-canonical NF-kB pathway"/>
</dbReference>
<dbReference type="Reactome" id="R-RNO-5669034">
    <property type="pathway name" value="TNFs bind their physiological receptors"/>
</dbReference>
<dbReference type="Reactome" id="R-RNO-5676594">
    <property type="pathway name" value="TNF receptor superfamily (TNFSF) members mediating non-canonical NF-kB pathway"/>
</dbReference>
<dbReference type="PRO" id="PR:Q06332"/>
<dbReference type="Proteomes" id="UP000002494">
    <property type="component" value="Chromosome 20"/>
</dbReference>
<dbReference type="Bgee" id="ENSRNOG00000000838">
    <property type="expression patterns" value="Expressed in Ammon's horn and 7 other cell types or tissues"/>
</dbReference>
<dbReference type="GO" id="GO:0005615">
    <property type="term" value="C:extracellular space"/>
    <property type="evidence" value="ECO:0000314"/>
    <property type="project" value="RGD"/>
</dbReference>
<dbReference type="GO" id="GO:0016020">
    <property type="term" value="C:membrane"/>
    <property type="evidence" value="ECO:0007669"/>
    <property type="project" value="UniProtKB-SubCell"/>
</dbReference>
<dbReference type="GO" id="GO:0005125">
    <property type="term" value="F:cytokine activity"/>
    <property type="evidence" value="ECO:0000318"/>
    <property type="project" value="GO_Central"/>
</dbReference>
<dbReference type="GO" id="GO:0005164">
    <property type="term" value="F:tumor necrosis factor receptor binding"/>
    <property type="evidence" value="ECO:0007669"/>
    <property type="project" value="InterPro"/>
</dbReference>
<dbReference type="GO" id="GO:0007166">
    <property type="term" value="P:cell surface receptor signaling pathway"/>
    <property type="evidence" value="ECO:0000318"/>
    <property type="project" value="GO_Central"/>
</dbReference>
<dbReference type="GO" id="GO:0050830">
    <property type="term" value="P:defense response to Gram-positive bacterium"/>
    <property type="evidence" value="ECO:0000266"/>
    <property type="project" value="RGD"/>
</dbReference>
<dbReference type="GO" id="GO:0006959">
    <property type="term" value="P:humoral immune response"/>
    <property type="evidence" value="ECO:0000266"/>
    <property type="project" value="RGD"/>
</dbReference>
<dbReference type="GO" id="GO:0006955">
    <property type="term" value="P:immune response"/>
    <property type="evidence" value="ECO:0000318"/>
    <property type="project" value="GO_Central"/>
</dbReference>
<dbReference type="GO" id="GO:0048535">
    <property type="term" value="P:lymph node development"/>
    <property type="evidence" value="ECO:0000266"/>
    <property type="project" value="RGD"/>
</dbReference>
<dbReference type="GO" id="GO:0048147">
    <property type="term" value="P:negative regulation of fibroblast proliferation"/>
    <property type="evidence" value="ECO:0000314"/>
    <property type="project" value="RGD"/>
</dbReference>
<dbReference type="GO" id="GO:0043065">
    <property type="term" value="P:positive regulation of apoptotic process"/>
    <property type="evidence" value="ECO:0000315"/>
    <property type="project" value="RGD"/>
</dbReference>
<dbReference type="GO" id="GO:0043123">
    <property type="term" value="P:positive regulation of canonical NF-kappaB signal transduction"/>
    <property type="evidence" value="ECO:0000318"/>
    <property type="project" value="GO_Central"/>
</dbReference>
<dbReference type="GO" id="GO:0002876">
    <property type="term" value="P:positive regulation of chronic inflammatory response to antigenic stimulus"/>
    <property type="evidence" value="ECO:0000266"/>
    <property type="project" value="RGD"/>
</dbReference>
<dbReference type="GO" id="GO:2001238">
    <property type="term" value="P:positive regulation of extrinsic apoptotic signaling pathway"/>
    <property type="evidence" value="ECO:0000318"/>
    <property type="project" value="GO_Central"/>
</dbReference>
<dbReference type="GO" id="GO:0060252">
    <property type="term" value="P:positive regulation of glial cell proliferation"/>
    <property type="evidence" value="ECO:0000315"/>
    <property type="project" value="RGD"/>
</dbReference>
<dbReference type="GO" id="GO:0002925">
    <property type="term" value="P:positive regulation of humoral immune response mediated by circulating immunoglobulin"/>
    <property type="evidence" value="ECO:0000266"/>
    <property type="project" value="RGD"/>
</dbReference>
<dbReference type="GO" id="GO:0032729">
    <property type="term" value="P:positive regulation of type II interferon production"/>
    <property type="evidence" value="ECO:0000266"/>
    <property type="project" value="RGD"/>
</dbReference>
<dbReference type="GO" id="GO:0001666">
    <property type="term" value="P:response to hypoxia"/>
    <property type="evidence" value="ECO:0000270"/>
    <property type="project" value="RGD"/>
</dbReference>
<dbReference type="GO" id="GO:0032496">
    <property type="term" value="P:response to lipopolysaccharide"/>
    <property type="evidence" value="ECO:0000270"/>
    <property type="project" value="RGD"/>
</dbReference>
<dbReference type="GO" id="GO:0007584">
    <property type="term" value="P:response to nutrient"/>
    <property type="evidence" value="ECO:0000270"/>
    <property type="project" value="RGD"/>
</dbReference>
<dbReference type="GO" id="GO:0009410">
    <property type="term" value="P:response to xenobiotic stimulus"/>
    <property type="evidence" value="ECO:0000270"/>
    <property type="project" value="RGD"/>
</dbReference>
<dbReference type="CDD" id="cd00184">
    <property type="entry name" value="TNF"/>
    <property type="match status" value="1"/>
</dbReference>
<dbReference type="FunFam" id="2.60.120.40:FF:000016">
    <property type="entry name" value="Tumor necrosis factor"/>
    <property type="match status" value="1"/>
</dbReference>
<dbReference type="Gene3D" id="2.60.120.40">
    <property type="match status" value="1"/>
</dbReference>
<dbReference type="InterPro" id="IPR006053">
    <property type="entry name" value="TNF"/>
</dbReference>
<dbReference type="InterPro" id="IPR002960">
    <property type="entry name" value="TNF_beta"/>
</dbReference>
<dbReference type="InterPro" id="IPR021184">
    <property type="entry name" value="TNF_CS"/>
</dbReference>
<dbReference type="InterPro" id="IPR006052">
    <property type="entry name" value="TNF_dom"/>
</dbReference>
<dbReference type="InterPro" id="IPR008983">
    <property type="entry name" value="Tumour_necrosis_fac-like_dom"/>
</dbReference>
<dbReference type="PANTHER" id="PTHR11471:SF31">
    <property type="entry name" value="LYMPHOTOXIN-ALPHA"/>
    <property type="match status" value="1"/>
</dbReference>
<dbReference type="PANTHER" id="PTHR11471">
    <property type="entry name" value="TUMOR NECROSIS FACTOR FAMILY MEMBER"/>
    <property type="match status" value="1"/>
</dbReference>
<dbReference type="Pfam" id="PF00229">
    <property type="entry name" value="TNF"/>
    <property type="match status" value="1"/>
</dbReference>
<dbReference type="PRINTS" id="PR01234">
    <property type="entry name" value="TNECROSISFCT"/>
</dbReference>
<dbReference type="PRINTS" id="PR01236">
    <property type="entry name" value="TNFBETA"/>
</dbReference>
<dbReference type="SMART" id="SM00207">
    <property type="entry name" value="TNF"/>
    <property type="match status" value="1"/>
</dbReference>
<dbReference type="SUPFAM" id="SSF49842">
    <property type="entry name" value="TNF-like"/>
    <property type="match status" value="1"/>
</dbReference>
<dbReference type="PROSITE" id="PS00251">
    <property type="entry name" value="THD_1"/>
    <property type="match status" value="1"/>
</dbReference>
<dbReference type="PROSITE" id="PS50049">
    <property type="entry name" value="THD_2"/>
    <property type="match status" value="1"/>
</dbReference>
<comment type="function">
    <text evidence="2">Cytokine that in its homotrimeric form binds to TNFRSF1A/TNFR1, TNFRSF1B/TNFBR and TNFRSF14/HVEM (By similarity). In its heterotrimeric form with LTB binds to TNFRSF3/LTBR. Lymphotoxin is produced by lymphocytes and is cytotoxic for a wide range of tumor cells in vitro and in vivo.</text>
</comment>
<comment type="subunit">
    <text evidence="2">Homotrimer, and heterotrimer of either two LTB and one LTA subunits or (less prevalent) two LTA and one LTB subunits. Interacts with TNFRSF14.</text>
</comment>
<comment type="subcellular location">
    <subcellularLocation>
        <location evidence="1">Secreted</location>
    </subcellularLocation>
    <subcellularLocation>
        <location evidence="1">Membrane</location>
    </subcellularLocation>
    <text evidence="1">The homotrimer is secreted. The heterotrimer is membrane-associated.</text>
</comment>
<comment type="similarity">
    <text evidence="5">Belongs to the tumor necrosis factor family.</text>
</comment>
<gene>
    <name type="primary">Lta</name>
    <name type="synonym">Tnfb</name>
    <name type="synonym">Tnfsf1</name>
</gene>
<sequence>MTPLGRLHLLRVLSTPPVFLLGLLLALPLGAQGLSGVRFSASRTAHQPPQKHLTHGLLKPAAHLVGYPSKQNSLLWRANTDRAFLRHGFSLNNNSLLIPTSGLYFVYSQVVFSGESCSPRAIPTPIYLAHEVQLFSSQYPFHVPLLSAQKSVYPGLQGPWVRSMYQGAVFLLSKGDQLSTHTDGISHLHFSPSTVFFGAFAL</sequence>
<reference key="1">
    <citation type="journal article" date="1993" name="Gene">
        <title>Cloning and sequence analysis of the rat tumor necrosis factor-encoding genes.</title>
        <authorList>
            <person name="Kwon J."/>
            <person name="Chung I.Y."/>
            <person name="Benveniste E.N."/>
        </authorList>
    </citation>
    <scope>NUCLEOTIDE SEQUENCE [GENOMIC DNA]</scope>
    <source>
        <strain>Sprague-Dawley</strain>
        <tissue>Testis</tissue>
    </source>
</reference>
<reference key="2">
    <citation type="journal article" date="2004" name="Genome Res.">
        <title>The genomic sequence and comparative analysis of the rat major histocompatibility complex.</title>
        <authorList>
            <person name="Hurt P."/>
            <person name="Walter L."/>
            <person name="Sudbrak R."/>
            <person name="Klages S."/>
            <person name="Mueller I."/>
            <person name="Shiina T."/>
            <person name="Inoko H."/>
            <person name="Lehrach H."/>
            <person name="Guenther E."/>
            <person name="Reinhardt R."/>
            <person name="Himmelbauer H."/>
        </authorList>
    </citation>
    <scope>NUCLEOTIDE SEQUENCE [LARGE SCALE GENOMIC DNA]</scope>
    <source>
        <strain>Brown Norway</strain>
    </source>
</reference>
<keyword id="KW-0202">Cytokine</keyword>
<keyword id="KW-0325">Glycoprotein</keyword>
<keyword id="KW-0472">Membrane</keyword>
<keyword id="KW-1185">Reference proteome</keyword>
<keyword id="KW-0964">Secreted</keyword>
<keyword id="KW-0732">Signal</keyword>
<proteinExistence type="inferred from homology"/>
<protein>
    <recommendedName>
        <fullName>Lymphotoxin-alpha</fullName>
        <shortName>LT-alpha</shortName>
    </recommendedName>
    <alternativeName>
        <fullName>TNF-beta</fullName>
    </alternativeName>
    <alternativeName>
        <fullName>Tumor necrosis factor ligand superfamily member 1</fullName>
    </alternativeName>
</protein>
<name>TNFB_RAT</name>